<evidence type="ECO:0000255" key="1">
    <source>
        <dbReference type="HAMAP-Rule" id="MF_00402"/>
    </source>
</evidence>
<evidence type="ECO:0000305" key="2"/>
<comment type="function">
    <text evidence="1">This protein is located at the 30S-50S ribosomal subunit interface and may play a role in the structure and function of the aminoacyl-tRNA binding site.</text>
</comment>
<comment type="similarity">
    <text evidence="1">Belongs to the bacterial ribosomal protein bL19 family.</text>
</comment>
<accession>Q64YW4</accession>
<protein>
    <recommendedName>
        <fullName evidence="1">Large ribosomal subunit protein bL19</fullName>
    </recommendedName>
    <alternativeName>
        <fullName evidence="2">50S ribosomal protein L19</fullName>
    </alternativeName>
</protein>
<proteinExistence type="inferred from homology"/>
<organism>
    <name type="scientific">Bacteroides fragilis (strain YCH46)</name>
    <dbReference type="NCBI Taxonomy" id="295405"/>
    <lineage>
        <taxon>Bacteria</taxon>
        <taxon>Pseudomonadati</taxon>
        <taxon>Bacteroidota</taxon>
        <taxon>Bacteroidia</taxon>
        <taxon>Bacteroidales</taxon>
        <taxon>Bacteroidaceae</taxon>
        <taxon>Bacteroides</taxon>
    </lineage>
</organism>
<name>RL19_BACFR</name>
<gene>
    <name evidence="1" type="primary">rplS</name>
    <name type="ordered locus">BF0563</name>
</gene>
<keyword id="KW-0687">Ribonucleoprotein</keyword>
<keyword id="KW-0689">Ribosomal protein</keyword>
<feature type="chain" id="PRO_0000163407" description="Large ribosomal subunit protein bL19">
    <location>
        <begin position="1"/>
        <end position="117"/>
    </location>
</feature>
<dbReference type="EMBL" id="AP006841">
    <property type="protein sequence ID" value="BAD47312.1"/>
    <property type="molecule type" value="Genomic_DNA"/>
</dbReference>
<dbReference type="RefSeq" id="WP_005778830.1">
    <property type="nucleotide sequence ID" value="NZ_UYXF01000019.1"/>
</dbReference>
<dbReference type="RefSeq" id="YP_097846.1">
    <property type="nucleotide sequence ID" value="NC_006347.1"/>
</dbReference>
<dbReference type="SMR" id="Q64YW4"/>
<dbReference type="STRING" id="295405.BF0563"/>
<dbReference type="GeneID" id="93106135"/>
<dbReference type="KEGG" id="bfr:BF0563"/>
<dbReference type="PATRIC" id="fig|295405.11.peg.578"/>
<dbReference type="HOGENOM" id="CLU_103507_2_2_10"/>
<dbReference type="OrthoDB" id="9803541at2"/>
<dbReference type="Proteomes" id="UP000002197">
    <property type="component" value="Chromosome"/>
</dbReference>
<dbReference type="GO" id="GO:0022625">
    <property type="term" value="C:cytosolic large ribosomal subunit"/>
    <property type="evidence" value="ECO:0007669"/>
    <property type="project" value="TreeGrafter"/>
</dbReference>
<dbReference type="GO" id="GO:0003735">
    <property type="term" value="F:structural constituent of ribosome"/>
    <property type="evidence" value="ECO:0007669"/>
    <property type="project" value="InterPro"/>
</dbReference>
<dbReference type="GO" id="GO:0006412">
    <property type="term" value="P:translation"/>
    <property type="evidence" value="ECO:0007669"/>
    <property type="project" value="UniProtKB-UniRule"/>
</dbReference>
<dbReference type="FunFam" id="2.30.30.790:FF:000001">
    <property type="entry name" value="50S ribosomal protein L19"/>
    <property type="match status" value="1"/>
</dbReference>
<dbReference type="Gene3D" id="2.30.30.790">
    <property type="match status" value="1"/>
</dbReference>
<dbReference type="HAMAP" id="MF_00402">
    <property type="entry name" value="Ribosomal_bL19"/>
    <property type="match status" value="1"/>
</dbReference>
<dbReference type="InterPro" id="IPR001857">
    <property type="entry name" value="Ribosomal_bL19"/>
</dbReference>
<dbReference type="InterPro" id="IPR018257">
    <property type="entry name" value="Ribosomal_bL19_CS"/>
</dbReference>
<dbReference type="InterPro" id="IPR038657">
    <property type="entry name" value="Ribosomal_bL19_sf"/>
</dbReference>
<dbReference type="InterPro" id="IPR008991">
    <property type="entry name" value="Translation_prot_SH3-like_sf"/>
</dbReference>
<dbReference type="NCBIfam" id="TIGR01024">
    <property type="entry name" value="rplS_bact"/>
    <property type="match status" value="1"/>
</dbReference>
<dbReference type="PANTHER" id="PTHR15680:SF9">
    <property type="entry name" value="LARGE RIBOSOMAL SUBUNIT PROTEIN BL19M"/>
    <property type="match status" value="1"/>
</dbReference>
<dbReference type="PANTHER" id="PTHR15680">
    <property type="entry name" value="RIBOSOMAL PROTEIN L19"/>
    <property type="match status" value="1"/>
</dbReference>
<dbReference type="Pfam" id="PF01245">
    <property type="entry name" value="Ribosomal_L19"/>
    <property type="match status" value="1"/>
</dbReference>
<dbReference type="PIRSF" id="PIRSF002191">
    <property type="entry name" value="Ribosomal_L19"/>
    <property type="match status" value="1"/>
</dbReference>
<dbReference type="PRINTS" id="PR00061">
    <property type="entry name" value="RIBOSOMALL19"/>
</dbReference>
<dbReference type="SUPFAM" id="SSF50104">
    <property type="entry name" value="Translation proteins SH3-like domain"/>
    <property type="match status" value="1"/>
</dbReference>
<dbReference type="PROSITE" id="PS01015">
    <property type="entry name" value="RIBOSOMAL_L19"/>
    <property type="match status" value="1"/>
</dbReference>
<reference key="1">
    <citation type="journal article" date="2004" name="Proc. Natl. Acad. Sci. U.S.A.">
        <title>Genomic analysis of Bacteroides fragilis reveals extensive DNA inversions regulating cell surface adaptation.</title>
        <authorList>
            <person name="Kuwahara T."/>
            <person name="Yamashita A."/>
            <person name="Hirakawa H."/>
            <person name="Nakayama H."/>
            <person name="Toh H."/>
            <person name="Okada N."/>
            <person name="Kuhara S."/>
            <person name="Hattori M."/>
            <person name="Hayashi T."/>
            <person name="Ohnishi Y."/>
        </authorList>
    </citation>
    <scope>NUCLEOTIDE SEQUENCE [LARGE SCALE GENOMIC DNA]</scope>
    <source>
        <strain>YCH46</strain>
    </source>
</reference>
<sequence>MDLIKIAEEAFATGKQHPSFKAGDTVTVAYRIIEGNKERVQLYRGVVIKIAGHGEKKRFTVRKMSGTVGVERIFPIESPAIDSIEVNKVGKVRRAKLYYLRALTGKKARIKEKRVNG</sequence>